<gene>
    <name type="primary">Klhl24</name>
</gene>
<dbReference type="EMBL" id="AK015239">
    <property type="protein sequence ID" value="BAB29759.2"/>
    <property type="status" value="ALT_INIT"/>
    <property type="molecule type" value="mRNA"/>
</dbReference>
<dbReference type="EMBL" id="AK044892">
    <property type="protein sequence ID" value="BAC32131.1"/>
    <property type="molecule type" value="mRNA"/>
</dbReference>
<dbReference type="EMBL" id="AK046446">
    <property type="protein sequence ID" value="BAC32732.1"/>
    <property type="molecule type" value="mRNA"/>
</dbReference>
<dbReference type="EMBL" id="AK163616">
    <property type="protein sequence ID" value="BAE37423.1"/>
    <property type="status" value="ALT_INIT"/>
    <property type="molecule type" value="mRNA"/>
</dbReference>
<dbReference type="EMBL" id="BC021407">
    <property type="protein sequence ID" value="AAH21407.2"/>
    <property type="status" value="ALT_INIT"/>
    <property type="molecule type" value="mRNA"/>
</dbReference>
<dbReference type="CCDS" id="CCDS28042.1"/>
<dbReference type="RefSeq" id="NP_083712.4">
    <property type="nucleotide sequence ID" value="NM_029436.3"/>
</dbReference>
<dbReference type="RefSeq" id="XP_006522750.1">
    <property type="nucleotide sequence ID" value="XM_006522687.5"/>
</dbReference>
<dbReference type="RefSeq" id="XP_036016067.1">
    <property type="nucleotide sequence ID" value="XM_036160174.1"/>
</dbReference>
<dbReference type="SMR" id="Q8BRG6"/>
<dbReference type="BioGRID" id="217740">
    <property type="interactions" value="6"/>
</dbReference>
<dbReference type="FunCoup" id="Q8BRG6">
    <property type="interactions" value="102"/>
</dbReference>
<dbReference type="STRING" id="10090.ENSMUSP00000023509"/>
<dbReference type="PhosphoSitePlus" id="Q8BRG6"/>
<dbReference type="PaxDb" id="10090-ENSMUSP00000023509"/>
<dbReference type="ProteomicsDB" id="265000"/>
<dbReference type="Antibodypedia" id="54833">
    <property type="antibodies" value="82 antibodies from 13 providers"/>
</dbReference>
<dbReference type="DNASU" id="75785"/>
<dbReference type="Ensembl" id="ENSMUST00000023509.5">
    <property type="protein sequence ID" value="ENSMUSP00000023509.4"/>
    <property type="gene ID" value="ENSMUSG00000062901.4"/>
</dbReference>
<dbReference type="GeneID" id="75785"/>
<dbReference type="KEGG" id="mmu:75785"/>
<dbReference type="UCSC" id="uc007yph.1">
    <property type="organism name" value="mouse"/>
</dbReference>
<dbReference type="AGR" id="MGI:1923035"/>
<dbReference type="CTD" id="54800"/>
<dbReference type="MGI" id="MGI:1923035">
    <property type="gene designation" value="Klhl24"/>
</dbReference>
<dbReference type="VEuPathDB" id="HostDB:ENSMUSG00000062901"/>
<dbReference type="eggNOG" id="KOG1721">
    <property type="taxonomic scope" value="Eukaryota"/>
</dbReference>
<dbReference type="eggNOG" id="KOG4441">
    <property type="taxonomic scope" value="Eukaryota"/>
</dbReference>
<dbReference type="GeneTree" id="ENSGT00940000154345"/>
<dbReference type="HOGENOM" id="CLU_004253_14_6_1"/>
<dbReference type="InParanoid" id="Q8BRG6"/>
<dbReference type="OMA" id="NDCYDPV"/>
<dbReference type="OrthoDB" id="19132at2759"/>
<dbReference type="PhylomeDB" id="Q8BRG6"/>
<dbReference type="TreeFam" id="TF351654"/>
<dbReference type="BioGRID-ORCS" id="75785">
    <property type="hits" value="5 hits in 78 CRISPR screens"/>
</dbReference>
<dbReference type="ChiTaRS" id="Klhl24">
    <property type="organism name" value="mouse"/>
</dbReference>
<dbReference type="PRO" id="PR:Q8BRG6"/>
<dbReference type="Proteomes" id="UP000000589">
    <property type="component" value="Chromosome 16"/>
</dbReference>
<dbReference type="RNAct" id="Q8BRG6">
    <property type="molecule type" value="protein"/>
</dbReference>
<dbReference type="Bgee" id="ENSMUSG00000062901">
    <property type="expression patterns" value="Expressed in metanephric mesenchyme and 240 other cell types or tissues"/>
</dbReference>
<dbReference type="ExpressionAtlas" id="Q8BRG6">
    <property type="expression patterns" value="baseline and differential"/>
</dbReference>
<dbReference type="GO" id="GO:0005912">
    <property type="term" value="C:adherens junction"/>
    <property type="evidence" value="ECO:0000250"/>
    <property type="project" value="UniProtKB"/>
</dbReference>
<dbReference type="GO" id="GO:0030424">
    <property type="term" value="C:axon"/>
    <property type="evidence" value="ECO:0007669"/>
    <property type="project" value="UniProtKB-SubCell"/>
</dbReference>
<dbReference type="GO" id="GO:0031463">
    <property type="term" value="C:Cul3-RING ubiquitin ligase complex"/>
    <property type="evidence" value="ECO:0000250"/>
    <property type="project" value="UniProtKB"/>
</dbReference>
<dbReference type="GO" id="GO:0005737">
    <property type="term" value="C:cytoplasm"/>
    <property type="evidence" value="ECO:0000250"/>
    <property type="project" value="UniProtKB"/>
</dbReference>
<dbReference type="GO" id="GO:0030057">
    <property type="term" value="C:desmosome"/>
    <property type="evidence" value="ECO:0000250"/>
    <property type="project" value="UniProtKB"/>
</dbReference>
<dbReference type="GO" id="GO:0043204">
    <property type="term" value="C:perikaryon"/>
    <property type="evidence" value="ECO:0007669"/>
    <property type="project" value="UniProtKB-SubCell"/>
</dbReference>
<dbReference type="GO" id="GO:0045109">
    <property type="term" value="P:intermediate filament organization"/>
    <property type="evidence" value="ECO:0000250"/>
    <property type="project" value="UniProtKB"/>
</dbReference>
<dbReference type="GO" id="GO:0051865">
    <property type="term" value="P:protein autoubiquitination"/>
    <property type="evidence" value="ECO:0000250"/>
    <property type="project" value="UniProtKB"/>
</dbReference>
<dbReference type="GO" id="GO:0016567">
    <property type="term" value="P:protein ubiquitination"/>
    <property type="evidence" value="ECO:0000250"/>
    <property type="project" value="UniProtKB"/>
</dbReference>
<dbReference type="CDD" id="cd18463">
    <property type="entry name" value="BACK_KLHL24"/>
    <property type="match status" value="1"/>
</dbReference>
<dbReference type="CDD" id="cd18253">
    <property type="entry name" value="BTB_POZ_KLHL24_KRIP6"/>
    <property type="match status" value="1"/>
</dbReference>
<dbReference type="FunFam" id="1.25.40.420:FF:000001">
    <property type="entry name" value="Kelch-like family member 12"/>
    <property type="match status" value="1"/>
</dbReference>
<dbReference type="FunFam" id="2.120.10.80:FF:000023">
    <property type="entry name" value="Kelch-like family member 24"/>
    <property type="match status" value="1"/>
</dbReference>
<dbReference type="FunFam" id="3.30.710.10:FF:000071">
    <property type="entry name" value="Kelch-like family member 24"/>
    <property type="match status" value="1"/>
</dbReference>
<dbReference type="Gene3D" id="1.25.40.420">
    <property type="match status" value="1"/>
</dbReference>
<dbReference type="Gene3D" id="2.120.10.80">
    <property type="entry name" value="Kelch-type beta propeller"/>
    <property type="match status" value="1"/>
</dbReference>
<dbReference type="Gene3D" id="3.30.710.10">
    <property type="entry name" value="Potassium Channel Kv1.1, Chain A"/>
    <property type="match status" value="1"/>
</dbReference>
<dbReference type="InterPro" id="IPR011705">
    <property type="entry name" value="BACK"/>
</dbReference>
<dbReference type="InterPro" id="IPR017096">
    <property type="entry name" value="BTB-kelch_protein"/>
</dbReference>
<dbReference type="InterPro" id="IPR000210">
    <property type="entry name" value="BTB/POZ_dom"/>
</dbReference>
<dbReference type="InterPro" id="IPR030596">
    <property type="entry name" value="BTB_POZ_KLHL24"/>
</dbReference>
<dbReference type="InterPro" id="IPR015915">
    <property type="entry name" value="Kelch-typ_b-propeller"/>
</dbReference>
<dbReference type="InterPro" id="IPR006652">
    <property type="entry name" value="Kelch_1"/>
</dbReference>
<dbReference type="InterPro" id="IPR047071">
    <property type="entry name" value="KLHL24_BACK"/>
</dbReference>
<dbReference type="InterPro" id="IPR011333">
    <property type="entry name" value="SKP1/BTB/POZ_sf"/>
</dbReference>
<dbReference type="PANTHER" id="PTHR24412">
    <property type="entry name" value="KELCH PROTEIN"/>
    <property type="match status" value="1"/>
</dbReference>
<dbReference type="PANTHER" id="PTHR24412:SF215">
    <property type="entry name" value="KELCH-LIKE PROTEIN 24"/>
    <property type="match status" value="1"/>
</dbReference>
<dbReference type="Pfam" id="PF07707">
    <property type="entry name" value="BACK"/>
    <property type="match status" value="1"/>
</dbReference>
<dbReference type="Pfam" id="PF00651">
    <property type="entry name" value="BTB"/>
    <property type="match status" value="1"/>
</dbReference>
<dbReference type="Pfam" id="PF01344">
    <property type="entry name" value="Kelch_1"/>
    <property type="match status" value="1"/>
</dbReference>
<dbReference type="Pfam" id="PF24681">
    <property type="entry name" value="Kelch_KLHDC2_KLHL20_DRC7"/>
    <property type="match status" value="1"/>
</dbReference>
<dbReference type="PIRSF" id="PIRSF037037">
    <property type="entry name" value="Kelch-like_protein_gigaxonin"/>
    <property type="match status" value="1"/>
</dbReference>
<dbReference type="SMART" id="SM00875">
    <property type="entry name" value="BACK"/>
    <property type="match status" value="1"/>
</dbReference>
<dbReference type="SMART" id="SM00225">
    <property type="entry name" value="BTB"/>
    <property type="match status" value="1"/>
</dbReference>
<dbReference type="SMART" id="SM00612">
    <property type="entry name" value="Kelch"/>
    <property type="match status" value="6"/>
</dbReference>
<dbReference type="SUPFAM" id="SSF117281">
    <property type="entry name" value="Kelch motif"/>
    <property type="match status" value="1"/>
</dbReference>
<dbReference type="SUPFAM" id="SSF54695">
    <property type="entry name" value="POZ domain"/>
    <property type="match status" value="1"/>
</dbReference>
<dbReference type="PROSITE" id="PS50097">
    <property type="entry name" value="BTB"/>
    <property type="match status" value="1"/>
</dbReference>
<organism>
    <name type="scientific">Mus musculus</name>
    <name type="common">Mouse</name>
    <dbReference type="NCBI Taxonomy" id="10090"/>
    <lineage>
        <taxon>Eukaryota</taxon>
        <taxon>Metazoa</taxon>
        <taxon>Chordata</taxon>
        <taxon>Craniata</taxon>
        <taxon>Vertebrata</taxon>
        <taxon>Euteleostomi</taxon>
        <taxon>Mammalia</taxon>
        <taxon>Eutheria</taxon>
        <taxon>Euarchontoglires</taxon>
        <taxon>Glires</taxon>
        <taxon>Rodentia</taxon>
        <taxon>Myomorpha</taxon>
        <taxon>Muroidea</taxon>
        <taxon>Muridae</taxon>
        <taxon>Murinae</taxon>
        <taxon>Mus</taxon>
        <taxon>Mus</taxon>
    </lineage>
</organism>
<reference key="1">
    <citation type="journal article" date="2005" name="Science">
        <title>The transcriptional landscape of the mammalian genome.</title>
        <authorList>
            <person name="Carninci P."/>
            <person name="Kasukawa T."/>
            <person name="Katayama S."/>
            <person name="Gough J."/>
            <person name="Frith M.C."/>
            <person name="Maeda N."/>
            <person name="Oyama R."/>
            <person name="Ravasi T."/>
            <person name="Lenhard B."/>
            <person name="Wells C."/>
            <person name="Kodzius R."/>
            <person name="Shimokawa K."/>
            <person name="Bajic V.B."/>
            <person name="Brenner S.E."/>
            <person name="Batalov S."/>
            <person name="Forrest A.R."/>
            <person name="Zavolan M."/>
            <person name="Davis M.J."/>
            <person name="Wilming L.G."/>
            <person name="Aidinis V."/>
            <person name="Allen J.E."/>
            <person name="Ambesi-Impiombato A."/>
            <person name="Apweiler R."/>
            <person name="Aturaliya R.N."/>
            <person name="Bailey T.L."/>
            <person name="Bansal M."/>
            <person name="Baxter L."/>
            <person name="Beisel K.W."/>
            <person name="Bersano T."/>
            <person name="Bono H."/>
            <person name="Chalk A.M."/>
            <person name="Chiu K.P."/>
            <person name="Choudhary V."/>
            <person name="Christoffels A."/>
            <person name="Clutterbuck D.R."/>
            <person name="Crowe M.L."/>
            <person name="Dalla E."/>
            <person name="Dalrymple B.P."/>
            <person name="de Bono B."/>
            <person name="Della Gatta G."/>
            <person name="di Bernardo D."/>
            <person name="Down T."/>
            <person name="Engstrom P."/>
            <person name="Fagiolini M."/>
            <person name="Faulkner G."/>
            <person name="Fletcher C.F."/>
            <person name="Fukushima T."/>
            <person name="Furuno M."/>
            <person name="Futaki S."/>
            <person name="Gariboldi M."/>
            <person name="Georgii-Hemming P."/>
            <person name="Gingeras T.R."/>
            <person name="Gojobori T."/>
            <person name="Green R.E."/>
            <person name="Gustincich S."/>
            <person name="Harbers M."/>
            <person name="Hayashi Y."/>
            <person name="Hensch T.K."/>
            <person name="Hirokawa N."/>
            <person name="Hill D."/>
            <person name="Huminiecki L."/>
            <person name="Iacono M."/>
            <person name="Ikeo K."/>
            <person name="Iwama A."/>
            <person name="Ishikawa T."/>
            <person name="Jakt M."/>
            <person name="Kanapin A."/>
            <person name="Katoh M."/>
            <person name="Kawasawa Y."/>
            <person name="Kelso J."/>
            <person name="Kitamura H."/>
            <person name="Kitano H."/>
            <person name="Kollias G."/>
            <person name="Krishnan S.P."/>
            <person name="Kruger A."/>
            <person name="Kummerfeld S.K."/>
            <person name="Kurochkin I.V."/>
            <person name="Lareau L.F."/>
            <person name="Lazarevic D."/>
            <person name="Lipovich L."/>
            <person name="Liu J."/>
            <person name="Liuni S."/>
            <person name="McWilliam S."/>
            <person name="Madan Babu M."/>
            <person name="Madera M."/>
            <person name="Marchionni L."/>
            <person name="Matsuda H."/>
            <person name="Matsuzawa S."/>
            <person name="Miki H."/>
            <person name="Mignone F."/>
            <person name="Miyake S."/>
            <person name="Morris K."/>
            <person name="Mottagui-Tabar S."/>
            <person name="Mulder N."/>
            <person name="Nakano N."/>
            <person name="Nakauchi H."/>
            <person name="Ng P."/>
            <person name="Nilsson R."/>
            <person name="Nishiguchi S."/>
            <person name="Nishikawa S."/>
            <person name="Nori F."/>
            <person name="Ohara O."/>
            <person name="Okazaki Y."/>
            <person name="Orlando V."/>
            <person name="Pang K.C."/>
            <person name="Pavan W.J."/>
            <person name="Pavesi G."/>
            <person name="Pesole G."/>
            <person name="Petrovsky N."/>
            <person name="Piazza S."/>
            <person name="Reed J."/>
            <person name="Reid J.F."/>
            <person name="Ring B.Z."/>
            <person name="Ringwald M."/>
            <person name="Rost B."/>
            <person name="Ruan Y."/>
            <person name="Salzberg S.L."/>
            <person name="Sandelin A."/>
            <person name="Schneider C."/>
            <person name="Schoenbach C."/>
            <person name="Sekiguchi K."/>
            <person name="Semple C.A."/>
            <person name="Seno S."/>
            <person name="Sessa L."/>
            <person name="Sheng Y."/>
            <person name="Shibata Y."/>
            <person name="Shimada H."/>
            <person name="Shimada K."/>
            <person name="Silva D."/>
            <person name="Sinclair B."/>
            <person name="Sperling S."/>
            <person name="Stupka E."/>
            <person name="Sugiura K."/>
            <person name="Sultana R."/>
            <person name="Takenaka Y."/>
            <person name="Taki K."/>
            <person name="Tammoja K."/>
            <person name="Tan S.L."/>
            <person name="Tang S."/>
            <person name="Taylor M.S."/>
            <person name="Tegner J."/>
            <person name="Teichmann S.A."/>
            <person name="Ueda H.R."/>
            <person name="van Nimwegen E."/>
            <person name="Verardo R."/>
            <person name="Wei C.L."/>
            <person name="Yagi K."/>
            <person name="Yamanishi H."/>
            <person name="Zabarovsky E."/>
            <person name="Zhu S."/>
            <person name="Zimmer A."/>
            <person name="Hide W."/>
            <person name="Bult C."/>
            <person name="Grimmond S.M."/>
            <person name="Teasdale R.D."/>
            <person name="Liu E.T."/>
            <person name="Brusic V."/>
            <person name="Quackenbush J."/>
            <person name="Wahlestedt C."/>
            <person name="Mattick J.S."/>
            <person name="Hume D.A."/>
            <person name="Kai C."/>
            <person name="Sasaki D."/>
            <person name="Tomaru Y."/>
            <person name="Fukuda S."/>
            <person name="Kanamori-Katayama M."/>
            <person name="Suzuki M."/>
            <person name="Aoki J."/>
            <person name="Arakawa T."/>
            <person name="Iida J."/>
            <person name="Imamura K."/>
            <person name="Itoh M."/>
            <person name="Kato T."/>
            <person name="Kawaji H."/>
            <person name="Kawagashira N."/>
            <person name="Kawashima T."/>
            <person name="Kojima M."/>
            <person name="Kondo S."/>
            <person name="Konno H."/>
            <person name="Nakano K."/>
            <person name="Ninomiya N."/>
            <person name="Nishio T."/>
            <person name="Okada M."/>
            <person name="Plessy C."/>
            <person name="Shibata K."/>
            <person name="Shiraki T."/>
            <person name="Suzuki S."/>
            <person name="Tagami M."/>
            <person name="Waki K."/>
            <person name="Watahiki A."/>
            <person name="Okamura-Oho Y."/>
            <person name="Suzuki H."/>
            <person name="Kawai J."/>
            <person name="Hayashizaki Y."/>
        </authorList>
    </citation>
    <scope>NUCLEOTIDE SEQUENCE [LARGE SCALE MRNA]</scope>
    <source>
        <strain>C57BL/6J</strain>
        <tissue>Adipose tissue</tissue>
        <tissue>Corpora quadrigemina</tissue>
        <tissue>Testis</tissue>
    </source>
</reference>
<reference key="2">
    <citation type="journal article" date="2004" name="Genome Res.">
        <title>The status, quality, and expansion of the NIH full-length cDNA project: the Mammalian Gene Collection (MGC).</title>
        <authorList>
            <consortium name="The MGC Project Team"/>
        </authorList>
    </citation>
    <scope>NUCLEOTIDE SEQUENCE [LARGE SCALE MRNA] OF 73-600</scope>
    <source>
        <strain>FVB/N</strain>
        <tissue>Mammary tumor</tissue>
    </source>
</reference>
<reference key="3">
    <citation type="journal article" date="2016" name="Nat. Genet.">
        <title>Stabilizing mutations of KLHL24 ubiquitin ligase cause loss of keratin 14 and human skin fragility.</title>
        <authorList>
            <person name="Lin Z."/>
            <person name="Li S."/>
            <person name="Feng C."/>
            <person name="Yang S."/>
            <person name="Wang H."/>
            <person name="Ma D."/>
            <person name="Zhang J."/>
            <person name="Gou M."/>
            <person name="Bu D."/>
            <person name="Zhang T."/>
            <person name="Kong X."/>
            <person name="Wang X."/>
            <person name="Sarig O."/>
            <person name="Ren Y."/>
            <person name="Dai L."/>
            <person name="Liu H."/>
            <person name="Zhang J."/>
            <person name="Li F."/>
            <person name="Hu Y."/>
            <person name="Padalon-Brauch G."/>
            <person name="Vodo D."/>
            <person name="Zhou F."/>
            <person name="Chen T."/>
            <person name="Deng H."/>
            <person name="Sprecher E."/>
            <person name="Yang Y."/>
            <person name="Tan X."/>
        </authorList>
    </citation>
    <scope>FUNCTION</scope>
    <scope>TISSUE SPECIFICITY</scope>
</reference>
<keyword id="KW-0965">Cell junction</keyword>
<keyword id="KW-0966">Cell projection</keyword>
<keyword id="KW-0963">Cytoplasm</keyword>
<keyword id="KW-0880">Kelch repeat</keyword>
<keyword id="KW-1185">Reference proteome</keyword>
<keyword id="KW-0677">Repeat</keyword>
<keyword id="KW-0832">Ubl conjugation</keyword>
<keyword id="KW-0833">Ubl conjugation pathway</keyword>
<protein>
    <recommendedName>
        <fullName>Kelch-like protein 24</fullName>
    </recommendedName>
    <alternativeName>
        <fullName>Kainate receptor-interacting protein for GluR6</fullName>
        <shortName>KRIP6</shortName>
    </alternativeName>
</protein>
<proteinExistence type="evidence at transcript level"/>
<comment type="function">
    <text evidence="1 2 4">Controls KRT14 levels during keratinocytes differentiation (PubMed:27798626). As part of the BCR(KLHL24) E3 ubiquitin ligase complex, mediates ubiquitination of KRT14 (By similarity). Specifically reduces kainate receptor-mediated currents in hippocampal neurons, most probably by modulating channel properties (By similarity). Has a crucial role in cardiac development and function (By similarity).</text>
</comment>
<comment type="subunit">
    <text evidence="1 2">Forms homodimers. Interacts with GRIK2 (By similarity). Component of the BCR(KLHL24) E3 ubiquitin ligase complex, composed of CUL3, RBX1 and KLHL24. Interacts with CUL3. Interacts with KRT14 (By similarity).</text>
</comment>
<comment type="subcellular location">
    <subcellularLocation>
        <location evidence="2">Perikaryon</location>
    </subcellularLocation>
    <subcellularLocation>
        <location evidence="1">Cell projection</location>
        <location evidence="1">Axon</location>
    </subcellularLocation>
    <subcellularLocation>
        <location evidence="1 2">Cytoplasm</location>
    </subcellularLocation>
    <subcellularLocation>
        <location evidence="2">Cell junction</location>
        <location evidence="2">Desmosome</location>
    </subcellularLocation>
    <subcellularLocation>
        <location evidence="2">Cell junction</location>
        <location evidence="2">Adherens junction</location>
    </subcellularLocation>
</comment>
<comment type="tissue specificity">
    <text evidence="4">Expressed in the brain.</text>
</comment>
<comment type="PTM">
    <text evidence="2">Autoubiquitinated. Autoubiquitination leads to proteasomal degradation and is necessary to control KLHL24 levels.</text>
</comment>
<comment type="sequence caution" evidence="5">
    <conflict type="erroneous initiation">
        <sequence resource="EMBL-CDS" id="AAH21407"/>
    </conflict>
</comment>
<comment type="sequence caution" evidence="5">
    <conflict type="erroneous initiation">
        <sequence resource="EMBL-CDS" id="BAB29759"/>
    </conflict>
</comment>
<comment type="sequence caution" evidence="5">
    <conflict type="erroneous initiation">
        <sequence resource="EMBL-CDS" id="BAE37423"/>
    </conflict>
</comment>
<accession>Q8BRG6</accession>
<accession>Q3TQG0</accession>
<accession>Q78J30</accession>
<accession>Q8BQU1</accession>
<accession>Q9D5K3</accession>
<sequence>MVLILGRRLNREDLGVRDSPATKRKVFEMDPKSLTGHEYFDFSSGSSHAENILQIFNEFRDSRLFTDVIICVEGKEFPCHRAVLSACSSYFRAMFCNDHRESREMLVEINGILAEAMECFLQYVYTGKVKITTENVQYLFETSSLFQISVLRDACAKFLEEQLDPCNCLGIQRFADTHSLKTLFTKCKTFALQTFEDVSQHEEFLELDKDELIDYICSDELVIGKEEMVFEAVMRWVYRAVDLRRPLLHELLTHVRLPLLHPNYFVQTVEVDQLIQNSPECYQLLHEARRYHILGNEMMSPRTRPRRSTGYSEVIVVVGGCERVGGFNLPYTECYDPVTGEWKSLAKLPEFTKSEYAVCALRNDILVSGGRINSRDVWIYNSQLNIWIRVASLNKGRWRHKMAVLLGKVYVVGGYDGQNRLSSVECYDSFSNRWTEVAPLKEAVSSPAVTSCIGKLFVIGGGPDDNTCSDKVQSYDPETNSWLLRAAIPIAKRCITAVSLNNLIYVAGGLTKAVYCYDPVEDYWMHVQNTFSRQENCGMSVCNGKIYILGGRRENGEATDTILCYDPATSIITGVAAMPRPVSYHGCVTIHRYNEKCFKL</sequence>
<evidence type="ECO:0000250" key="1">
    <source>
        <dbReference type="UniProtKB" id="Q56A24"/>
    </source>
</evidence>
<evidence type="ECO:0000250" key="2">
    <source>
        <dbReference type="UniProtKB" id="Q6TFL4"/>
    </source>
</evidence>
<evidence type="ECO:0000255" key="3">
    <source>
        <dbReference type="PROSITE-ProRule" id="PRU00037"/>
    </source>
</evidence>
<evidence type="ECO:0000269" key="4">
    <source>
    </source>
</evidence>
<evidence type="ECO:0000305" key="5"/>
<feature type="chain" id="PRO_0000261595" description="Kelch-like protein 24">
    <location>
        <begin position="1"/>
        <end position="600"/>
    </location>
</feature>
<feature type="domain" description="BTB" evidence="3">
    <location>
        <begin position="66"/>
        <end position="133"/>
    </location>
</feature>
<feature type="domain" description="BACK">
    <location>
        <begin position="168"/>
        <end position="270"/>
    </location>
</feature>
<feature type="repeat" description="Kelch 1">
    <location>
        <begin position="314"/>
        <end position="363"/>
    </location>
</feature>
<feature type="repeat" description="Kelch 2">
    <location>
        <begin position="365"/>
        <end position="407"/>
    </location>
</feature>
<feature type="repeat" description="Kelch 3">
    <location>
        <begin position="408"/>
        <end position="454"/>
    </location>
</feature>
<feature type="repeat" description="Kelch 4">
    <location>
        <begin position="456"/>
        <end position="502"/>
    </location>
</feature>
<feature type="repeat" description="Kelch 5">
    <location>
        <begin position="504"/>
        <end position="544"/>
    </location>
</feature>
<feature type="repeat" description="Kelch 6">
    <location>
        <begin position="546"/>
        <end position="592"/>
    </location>
</feature>
<feature type="sequence conflict" description="In Ref. 1; BAB29759." evidence="5" ref="1">
    <original>R</original>
    <variation>T</variation>
    <location>
        <position position="8"/>
    </location>
</feature>
<feature type="sequence conflict" description="In Ref. 1; BAC32131." evidence="5" ref="1">
    <original>D</original>
    <variation>N</variation>
    <location>
        <position position="242"/>
    </location>
</feature>
<feature type="sequence conflict" description="In Ref. 1; BAC32732." evidence="5" ref="1">
    <original>D</original>
    <variation>N</variation>
    <location>
        <position position="464"/>
    </location>
</feature>
<name>KLH24_MOUSE</name>